<name>HLAG_PANTR</name>
<comment type="function">
    <text evidence="1">Involved in the presentation of foreign antigens to the immune system.</text>
</comment>
<comment type="subunit">
    <text evidence="2">Heterodimer of an alpha chain and a beta chain (beta-2-microglobulin). Homodimer; disulfide-linked. Binds to LILRB1 and LILRB2.</text>
</comment>
<comment type="subcellular location">
    <subcellularLocation>
        <location evidence="5">Cell membrane</location>
        <topology evidence="3">Single-pass type I membrane protein</topology>
    </subcellularLocation>
</comment>
<comment type="similarity">
    <text evidence="5">Belongs to the MHC class I family.</text>
</comment>
<accession>Q95IT1</accession>
<accession>Q1XHW6</accession>
<accession>Q7YR28</accession>
<sequence length="338" mass="38208">MVVMAPRTLFLLLSGALTLTETWAGSHSMRYFSAAVSRPGRGEPRFIAMGYVDDTQFVWFDSDSACPRMEPRAPWVEQEGPEYWEEETRNTKAHAQTDRINLQTLRGYYNQSEASSHTLQWMIGCDLGSDGRLLRGYEQYAYDGKDYLALNEDLRSWTAADTAAQISKRKCEAANAAEQRRAYLEGTCVEWLHRYLENGKEMLQRADPPKTHVTHHPVFDYEATLRCWALGFYPAEIILTWQRDGEDQTQDVELVETRPAGDGTFQKWAAVVVPSGEEQRYTCHVQHEGLPEPLMLRWKQSSLPTIPIMGIVAGLVVLAAVVTGAAVAAVLWRKKSSD</sequence>
<keyword id="KW-1003">Cell membrane</keyword>
<keyword id="KW-1015">Disulfide bond</keyword>
<keyword id="KW-0325">Glycoprotein</keyword>
<keyword id="KW-0391">Immunity</keyword>
<keyword id="KW-0472">Membrane</keyword>
<keyword id="KW-0490">MHC I</keyword>
<keyword id="KW-1185">Reference proteome</keyword>
<keyword id="KW-0732">Signal</keyword>
<keyword id="KW-0812">Transmembrane</keyword>
<keyword id="KW-1133">Transmembrane helix</keyword>
<feature type="signal peptide" evidence="3">
    <location>
        <begin position="1"/>
        <end position="24"/>
    </location>
</feature>
<feature type="chain" id="PRO_0000018887" description="Patr class I histocompatibility antigen, alpha chain G">
    <location>
        <begin position="25"/>
        <end position="338"/>
    </location>
</feature>
<feature type="topological domain" description="Extracellular" evidence="3">
    <location>
        <begin position="25"/>
        <end position="308"/>
    </location>
</feature>
<feature type="transmembrane region" description="Helical" evidence="3">
    <location>
        <begin position="309"/>
        <end position="332"/>
    </location>
</feature>
<feature type="topological domain" description="Cytoplasmic" evidence="3">
    <location>
        <begin position="333"/>
        <end position="338"/>
    </location>
</feature>
<feature type="domain" description="Ig-like C1-type">
    <location>
        <begin position="209"/>
        <end position="299"/>
    </location>
</feature>
<feature type="region of interest" description="Alpha-1">
    <location>
        <begin position="25"/>
        <end position="114"/>
    </location>
</feature>
<feature type="region of interest" description="Alpha-2">
    <location>
        <begin position="115"/>
        <end position="206"/>
    </location>
</feature>
<feature type="region of interest" description="Alpha-3">
    <location>
        <begin position="207"/>
        <end position="298"/>
    </location>
</feature>
<feature type="region of interest" description="Connecting peptide">
    <location>
        <begin position="299"/>
        <end position="308"/>
    </location>
</feature>
<feature type="glycosylation site" description="N-linked (GlcNAc...) asparagine" evidence="3">
    <location>
        <position position="110"/>
    </location>
</feature>
<feature type="disulfide bond" description="Interchain" evidence="4">
    <location>
        <position position="66"/>
    </location>
</feature>
<feature type="disulfide bond" evidence="4">
    <location>
        <begin position="125"/>
        <end position="188"/>
    </location>
</feature>
<feature type="disulfide bond" evidence="4">
    <location>
        <begin position="227"/>
        <end position="283"/>
    </location>
</feature>
<gene>
    <name type="primary">Patr-G</name>
</gene>
<organism>
    <name type="scientific">Pan troglodytes</name>
    <name type="common">Chimpanzee</name>
    <dbReference type="NCBI Taxonomy" id="9598"/>
    <lineage>
        <taxon>Eukaryota</taxon>
        <taxon>Metazoa</taxon>
        <taxon>Chordata</taxon>
        <taxon>Craniata</taxon>
        <taxon>Vertebrata</taxon>
        <taxon>Euteleostomi</taxon>
        <taxon>Mammalia</taxon>
        <taxon>Eutheria</taxon>
        <taxon>Euarchontoglires</taxon>
        <taxon>Primates</taxon>
        <taxon>Haplorrhini</taxon>
        <taxon>Catarrhini</taxon>
        <taxon>Hominidae</taxon>
        <taxon>Pan</taxon>
    </lineage>
</organism>
<reference key="1">
    <citation type="journal article" date="2001" name="Immunogenetics">
        <title>Genomic analysis of common chimpanzee major histocompatibility complex class I genes.</title>
        <authorList>
            <person name="Adams E.J."/>
            <person name="Parham P."/>
        </authorList>
    </citation>
    <scope>NUCLEOTIDE SEQUENCE [GENOMIC DNA]</scope>
</reference>
<reference key="2">
    <citation type="journal article" date="2003" name="Proc. Natl. Acad. Sci. U.S.A.">
        <title>Comparative sequencing of human and chimpanzee MHC class I regions unveils insertions/deletions as the major path to genomic divergence.</title>
        <authorList>
            <person name="Anzai T."/>
            <person name="Shiina T."/>
            <person name="Kimura N."/>
            <person name="Yanagiya K."/>
            <person name="Kohara S."/>
            <person name="Shigenari A."/>
            <person name="Yamagata T."/>
            <person name="Kulski J.K."/>
            <person name="Naruse T.K."/>
            <person name="Fujimori Y."/>
            <person name="Fukuzumi Y."/>
            <person name="Yamazaki M."/>
            <person name="Tashiro H."/>
            <person name="Iwamoto C."/>
            <person name="Umehara Y."/>
            <person name="Imanishi T."/>
            <person name="Meyer A."/>
            <person name="Ikeo K."/>
            <person name="Gojobori T."/>
            <person name="Bahram S."/>
            <person name="Inoko H."/>
        </authorList>
    </citation>
    <scope>NUCLEOTIDE SEQUENCE [LARGE SCALE GENOMIC DNA]</scope>
</reference>
<reference key="3">
    <citation type="journal article" date="2006" name="Genetics">
        <title>Rapid evolution of major histocompatibility complex class I genes in primates generates new disease alleles in humans via hitchhiking diversity.</title>
        <authorList>
            <person name="Shiina T."/>
            <person name="Ota M."/>
            <person name="Shimizu S."/>
            <person name="Katsuyama Y."/>
            <person name="Hashimoto N."/>
            <person name="Takasu M."/>
            <person name="Anzai T."/>
            <person name="Kulski J.K."/>
            <person name="Kikkawa E."/>
            <person name="Naruse T."/>
            <person name="Kimura N."/>
            <person name="Yanagiya K."/>
            <person name="Watanabe A."/>
            <person name="Hosomichi K."/>
            <person name="Kohara S."/>
            <person name="Iwamoto C."/>
            <person name="Umehara Y."/>
            <person name="Meyer A."/>
            <person name="Wanner V."/>
            <person name="Sano K."/>
            <person name="Macquin C."/>
            <person name="Ikeo K."/>
            <person name="Tokunaga K."/>
            <person name="Gojobori T."/>
            <person name="Inoko H."/>
            <person name="Bahram S."/>
        </authorList>
    </citation>
    <scope>NUCLEOTIDE SEQUENCE [LARGE SCALE GENOMIC DNA]</scope>
</reference>
<protein>
    <recommendedName>
        <fullName>Patr class I histocompatibility antigen, alpha chain G</fullName>
    </recommendedName>
    <alternativeName>
        <fullName>MHC class I antigen G</fullName>
    </alternativeName>
</protein>
<proteinExistence type="inferred from homology"/>
<dbReference type="EMBL" id="AF338356">
    <property type="protein sequence ID" value="AAK77480.1"/>
    <property type="molecule type" value="Genomic_DNA"/>
</dbReference>
<dbReference type="EMBL" id="BA000041">
    <property type="protein sequence ID" value="BAC78190.1"/>
    <property type="molecule type" value="Genomic_DNA"/>
</dbReference>
<dbReference type="EMBL" id="AB210189">
    <property type="protein sequence ID" value="BAE92803.1"/>
    <property type="molecule type" value="Genomic_DNA"/>
</dbReference>
<dbReference type="EMBL" id="AB210190">
    <property type="protein sequence ID" value="BAE92804.1"/>
    <property type="molecule type" value="Genomic_DNA"/>
</dbReference>
<dbReference type="RefSeq" id="NP_001038977.1">
    <property type="nucleotide sequence ID" value="NM_001045512.1"/>
</dbReference>
<dbReference type="RefSeq" id="XP_016810228.1">
    <property type="nucleotide sequence ID" value="XM_016954739.1"/>
</dbReference>
<dbReference type="SMR" id="Q95IT1"/>
<dbReference type="FunCoup" id="Q95IT1">
    <property type="interactions" value="689"/>
</dbReference>
<dbReference type="STRING" id="9598.ENSPTRP00000056399"/>
<dbReference type="GlyCosmos" id="Q95IT1">
    <property type="glycosylation" value="1 site, No reported glycans"/>
</dbReference>
<dbReference type="Ensembl" id="ENSPTRT00000108079.1">
    <property type="protein sequence ID" value="ENSPTRP00000077334.1"/>
    <property type="gene ID" value="ENSPTRG00000017908.7"/>
</dbReference>
<dbReference type="GeneID" id="494187"/>
<dbReference type="KEGG" id="ptr:494187"/>
<dbReference type="CTD" id="494187"/>
<dbReference type="GeneTree" id="ENSGT01120000271826"/>
<dbReference type="InParanoid" id="Q95IT1"/>
<dbReference type="Proteomes" id="UP000002277">
    <property type="component" value="Chromosome 6"/>
</dbReference>
<dbReference type="Bgee" id="ENSPTRG00000017908">
    <property type="expression patterns" value="Expressed in liver and 19 other cell types or tissues"/>
</dbReference>
<dbReference type="GO" id="GO:0009897">
    <property type="term" value="C:external side of plasma membrane"/>
    <property type="evidence" value="ECO:0000318"/>
    <property type="project" value="GO_Central"/>
</dbReference>
<dbReference type="GO" id="GO:0005615">
    <property type="term" value="C:extracellular space"/>
    <property type="evidence" value="ECO:0000318"/>
    <property type="project" value="GO_Central"/>
</dbReference>
<dbReference type="GO" id="GO:0042612">
    <property type="term" value="C:MHC class I protein complex"/>
    <property type="evidence" value="ECO:0007669"/>
    <property type="project" value="UniProtKB-KW"/>
</dbReference>
<dbReference type="GO" id="GO:0042605">
    <property type="term" value="F:peptide antigen binding"/>
    <property type="evidence" value="ECO:0000318"/>
    <property type="project" value="GO_Central"/>
</dbReference>
<dbReference type="GO" id="GO:0005102">
    <property type="term" value="F:signaling receptor binding"/>
    <property type="evidence" value="ECO:0000318"/>
    <property type="project" value="GO_Central"/>
</dbReference>
<dbReference type="GO" id="GO:0002486">
    <property type="term" value="P:antigen processing and presentation of endogenous peptide antigen via MHC class I via ER pathway, TAP-independent"/>
    <property type="evidence" value="ECO:0000318"/>
    <property type="project" value="GO_Central"/>
</dbReference>
<dbReference type="GO" id="GO:0002476">
    <property type="term" value="P:antigen processing and presentation of endogenous peptide antigen via MHC class Ib"/>
    <property type="evidence" value="ECO:0000318"/>
    <property type="project" value="GO_Central"/>
</dbReference>
<dbReference type="GO" id="GO:0006955">
    <property type="term" value="P:immune response"/>
    <property type="evidence" value="ECO:0000318"/>
    <property type="project" value="GO_Central"/>
</dbReference>
<dbReference type="GO" id="GO:0001916">
    <property type="term" value="P:positive regulation of T cell mediated cytotoxicity"/>
    <property type="evidence" value="ECO:0000318"/>
    <property type="project" value="GO_Central"/>
</dbReference>
<dbReference type="CDD" id="cd21022">
    <property type="entry name" value="IgC1_MHC_Ia_HLA-G"/>
    <property type="match status" value="1"/>
</dbReference>
<dbReference type="FunFam" id="2.60.40.10:FF:000014">
    <property type="entry name" value="H-2 class I histocompatibility antigen, alpha chain"/>
    <property type="match status" value="1"/>
</dbReference>
<dbReference type="FunFam" id="3.30.500.10:FF:000001">
    <property type="entry name" value="H-2 class I histocompatibility antigen, alpha chain"/>
    <property type="match status" value="1"/>
</dbReference>
<dbReference type="Gene3D" id="2.60.40.10">
    <property type="entry name" value="Immunoglobulins"/>
    <property type="match status" value="1"/>
</dbReference>
<dbReference type="Gene3D" id="3.30.500.10">
    <property type="entry name" value="MHC class I-like antigen recognition-like"/>
    <property type="match status" value="1"/>
</dbReference>
<dbReference type="InterPro" id="IPR007110">
    <property type="entry name" value="Ig-like_dom"/>
</dbReference>
<dbReference type="InterPro" id="IPR036179">
    <property type="entry name" value="Ig-like_dom_sf"/>
</dbReference>
<dbReference type="InterPro" id="IPR013783">
    <property type="entry name" value="Ig-like_fold"/>
</dbReference>
<dbReference type="InterPro" id="IPR003006">
    <property type="entry name" value="Ig/MHC_CS"/>
</dbReference>
<dbReference type="InterPro" id="IPR003597">
    <property type="entry name" value="Ig_C1-set"/>
</dbReference>
<dbReference type="InterPro" id="IPR050208">
    <property type="entry name" value="MHC_class-I_related"/>
</dbReference>
<dbReference type="InterPro" id="IPR011161">
    <property type="entry name" value="MHC_I-like_Ag-recog"/>
</dbReference>
<dbReference type="InterPro" id="IPR037055">
    <property type="entry name" value="MHC_I-like_Ag-recog_sf"/>
</dbReference>
<dbReference type="InterPro" id="IPR011162">
    <property type="entry name" value="MHC_I/II-like_Ag-recog"/>
</dbReference>
<dbReference type="InterPro" id="IPR001039">
    <property type="entry name" value="MHC_I_a_a1/a2"/>
</dbReference>
<dbReference type="PANTHER" id="PTHR16675:SF169">
    <property type="entry name" value="HLA CLASS I HISTOCOMPATIBILITY ANTIGEN, ALPHA CHAIN G"/>
    <property type="match status" value="1"/>
</dbReference>
<dbReference type="PANTHER" id="PTHR16675">
    <property type="entry name" value="MHC CLASS I-RELATED"/>
    <property type="match status" value="1"/>
</dbReference>
<dbReference type="Pfam" id="PF07654">
    <property type="entry name" value="C1-set"/>
    <property type="match status" value="1"/>
</dbReference>
<dbReference type="Pfam" id="PF00129">
    <property type="entry name" value="MHC_I"/>
    <property type="match status" value="1"/>
</dbReference>
<dbReference type="PRINTS" id="PR01638">
    <property type="entry name" value="MHCCLASSI"/>
</dbReference>
<dbReference type="SMART" id="SM00407">
    <property type="entry name" value="IGc1"/>
    <property type="match status" value="1"/>
</dbReference>
<dbReference type="SUPFAM" id="SSF48726">
    <property type="entry name" value="Immunoglobulin"/>
    <property type="match status" value="1"/>
</dbReference>
<dbReference type="SUPFAM" id="SSF54452">
    <property type="entry name" value="MHC antigen-recognition domain"/>
    <property type="match status" value="1"/>
</dbReference>
<dbReference type="PROSITE" id="PS50835">
    <property type="entry name" value="IG_LIKE"/>
    <property type="match status" value="1"/>
</dbReference>
<dbReference type="PROSITE" id="PS00290">
    <property type="entry name" value="IG_MHC"/>
    <property type="match status" value="1"/>
</dbReference>
<evidence type="ECO:0000250" key="1"/>
<evidence type="ECO:0000250" key="2">
    <source>
        <dbReference type="UniProtKB" id="P17693"/>
    </source>
</evidence>
<evidence type="ECO:0000255" key="3"/>
<evidence type="ECO:0000255" key="4">
    <source>
        <dbReference type="PROSITE-ProRule" id="PRU00114"/>
    </source>
</evidence>
<evidence type="ECO:0000305" key="5"/>